<keyword id="KW-0997">Cell inner membrane</keyword>
<keyword id="KW-1003">Cell membrane</keyword>
<keyword id="KW-0472">Membrane</keyword>
<keyword id="KW-1185">Reference proteome</keyword>
<keyword id="KW-0762">Sugar transport</keyword>
<keyword id="KW-0769">Symport</keyword>
<keyword id="KW-0812">Transmembrane</keyword>
<keyword id="KW-1133">Transmembrane helix</keyword>
<keyword id="KW-0813">Transport</keyword>
<comment type="function">
    <text evidence="1">Uptake of L-rhamnose across the cytoplasmic membrane with the concomitant transport of protons into the cell (symport system).</text>
</comment>
<comment type="catalytic activity">
    <reaction evidence="1">
        <text>L-rhamnopyranose(in) + H(+)(in) = L-rhamnopyranose(out) + H(+)(out)</text>
        <dbReference type="Rhea" id="RHEA:29947"/>
        <dbReference type="ChEBI" id="CHEBI:15378"/>
        <dbReference type="ChEBI" id="CHEBI:62346"/>
    </reaction>
    <physiologicalReaction direction="right-to-left" evidence="1">
        <dbReference type="Rhea" id="RHEA:29949"/>
    </physiologicalReaction>
</comment>
<comment type="subcellular location">
    <subcellularLocation>
        <location evidence="1">Cell inner membrane</location>
        <topology evidence="1">Multi-pass membrane protein</topology>
    </subcellularLocation>
</comment>
<comment type="similarity">
    <text evidence="1">Belongs to the L-rhamnose transporter (TC 2.A.7.6) family.</text>
</comment>
<comment type="sequence caution" evidence="2">
    <conflict type="erroneous initiation">
        <sequence resource="EMBL-CDS" id="AAM84181"/>
    </conflict>
</comment>
<comment type="sequence caution" evidence="2">
    <conflict type="erroneous initiation">
        <sequence resource="EMBL-CDS" id="AAS60759"/>
    </conflict>
</comment>
<feature type="chain" id="PRO_0000208282" description="L-rhamnose-proton symporter">
    <location>
        <begin position="1"/>
        <end position="344"/>
    </location>
</feature>
<feature type="transmembrane region" description="Helical" evidence="1">
    <location>
        <begin position="4"/>
        <end position="24"/>
    </location>
</feature>
<feature type="transmembrane region" description="Helical" evidence="1">
    <location>
        <begin position="38"/>
        <end position="58"/>
    </location>
</feature>
<feature type="transmembrane region" description="Helical" evidence="1">
    <location>
        <begin position="68"/>
        <end position="88"/>
    </location>
</feature>
<feature type="transmembrane region" description="Helical" evidence="1">
    <location>
        <begin position="101"/>
        <end position="121"/>
    </location>
</feature>
<feature type="transmembrane region" description="Helical" evidence="1">
    <location>
        <begin position="137"/>
        <end position="157"/>
    </location>
</feature>
<feature type="transmembrane region" description="Helical" evidence="1">
    <location>
        <begin position="175"/>
        <end position="195"/>
    </location>
</feature>
<feature type="transmembrane region" description="Helical" evidence="1">
    <location>
        <begin position="207"/>
        <end position="227"/>
    </location>
</feature>
<feature type="transmembrane region" description="Helical" evidence="1">
    <location>
        <begin position="259"/>
        <end position="279"/>
    </location>
</feature>
<feature type="transmembrane region" description="Helical" evidence="1">
    <location>
        <begin position="290"/>
        <end position="310"/>
    </location>
</feature>
<feature type="transmembrane region" description="Helical" evidence="1">
    <location>
        <begin position="321"/>
        <end position="341"/>
    </location>
</feature>
<evidence type="ECO:0000255" key="1">
    <source>
        <dbReference type="HAMAP-Rule" id="MF_01532"/>
    </source>
</evidence>
<evidence type="ECO:0000305" key="2"/>
<gene>
    <name evidence="1" type="primary">rhaT</name>
    <name type="ordered locus">YPO0334</name>
    <name type="ordered locus">y0593</name>
    <name type="ordered locus">YP_0489</name>
</gene>
<dbReference type="EMBL" id="AL590842">
    <property type="protein sequence ID" value="CAL19018.1"/>
    <property type="molecule type" value="Genomic_DNA"/>
</dbReference>
<dbReference type="EMBL" id="AE009952">
    <property type="protein sequence ID" value="AAM84181.1"/>
    <property type="status" value="ALT_INIT"/>
    <property type="molecule type" value="Genomic_DNA"/>
</dbReference>
<dbReference type="EMBL" id="AE017042">
    <property type="protein sequence ID" value="AAS60759.1"/>
    <property type="status" value="ALT_INIT"/>
    <property type="molecule type" value="Genomic_DNA"/>
</dbReference>
<dbReference type="PIR" id="AH0041">
    <property type="entry name" value="AH0041"/>
</dbReference>
<dbReference type="RefSeq" id="WP_002209111.1">
    <property type="nucleotide sequence ID" value="NZ_WUCM01000014.1"/>
</dbReference>
<dbReference type="RefSeq" id="YP_002345414.1">
    <property type="nucleotide sequence ID" value="NC_003143.1"/>
</dbReference>
<dbReference type="STRING" id="214092.YPO0334"/>
<dbReference type="PaxDb" id="214092-YPO0334"/>
<dbReference type="EnsemblBacteria" id="AAS60759">
    <property type="protein sequence ID" value="AAS60759"/>
    <property type="gene ID" value="YP_0489"/>
</dbReference>
<dbReference type="GeneID" id="57974271"/>
<dbReference type="KEGG" id="ype:YPO0334"/>
<dbReference type="KEGG" id="ypk:y0593"/>
<dbReference type="KEGG" id="ypm:YP_0489"/>
<dbReference type="PATRIC" id="fig|214092.21.peg.573"/>
<dbReference type="eggNOG" id="ENOG502Z7ID">
    <property type="taxonomic scope" value="Bacteria"/>
</dbReference>
<dbReference type="HOGENOM" id="CLU_066437_0_0_6"/>
<dbReference type="OMA" id="QFFFYGM"/>
<dbReference type="OrthoDB" id="9790043at2"/>
<dbReference type="Proteomes" id="UP000000815">
    <property type="component" value="Chromosome"/>
</dbReference>
<dbReference type="Proteomes" id="UP000001019">
    <property type="component" value="Chromosome"/>
</dbReference>
<dbReference type="Proteomes" id="UP000002490">
    <property type="component" value="Chromosome"/>
</dbReference>
<dbReference type="GO" id="GO:0005886">
    <property type="term" value="C:plasma membrane"/>
    <property type="evidence" value="ECO:0007669"/>
    <property type="project" value="UniProtKB-SubCell"/>
</dbReference>
<dbReference type="GO" id="GO:0015153">
    <property type="term" value="F:rhamnose transmembrane transporter activity"/>
    <property type="evidence" value="ECO:0007669"/>
    <property type="project" value="UniProtKB-UniRule"/>
</dbReference>
<dbReference type="GO" id="GO:0015293">
    <property type="term" value="F:symporter activity"/>
    <property type="evidence" value="ECO:0007669"/>
    <property type="project" value="UniProtKB-KW"/>
</dbReference>
<dbReference type="HAMAP" id="MF_01532">
    <property type="entry name" value="RhaT"/>
    <property type="match status" value="1"/>
</dbReference>
<dbReference type="InterPro" id="IPR004673">
    <property type="entry name" value="L-rhamnose-proton_sym_RhaT"/>
</dbReference>
<dbReference type="NCBIfam" id="NF010021">
    <property type="entry name" value="PRK13499.1-1"/>
    <property type="match status" value="1"/>
</dbReference>
<dbReference type="NCBIfam" id="NF010023">
    <property type="entry name" value="PRK13499.1-3"/>
    <property type="match status" value="1"/>
</dbReference>
<dbReference type="NCBIfam" id="TIGR00776">
    <property type="entry name" value="RhaT"/>
    <property type="match status" value="1"/>
</dbReference>
<dbReference type="Pfam" id="PF06379">
    <property type="entry name" value="RhaT"/>
    <property type="match status" value="1"/>
</dbReference>
<proteinExistence type="inferred from homology"/>
<name>RHAT_YERPE</name>
<accession>Q8ZIZ8</accession>
<accession>Q0WJX4</accession>
<accession>Q74XE3</accession>
<accession>Q8D1F0</accession>
<protein>
    <recommendedName>
        <fullName evidence="1">L-rhamnose-proton symporter</fullName>
    </recommendedName>
    <alternativeName>
        <fullName evidence="1">L-rhamnose-H(+) transport protein</fullName>
    </alternativeName>
</protein>
<organism>
    <name type="scientific">Yersinia pestis</name>
    <dbReference type="NCBI Taxonomy" id="632"/>
    <lineage>
        <taxon>Bacteria</taxon>
        <taxon>Pseudomonadati</taxon>
        <taxon>Pseudomonadota</taxon>
        <taxon>Gammaproteobacteria</taxon>
        <taxon>Enterobacterales</taxon>
        <taxon>Yersiniaceae</taxon>
        <taxon>Yersinia</taxon>
    </lineage>
</organism>
<sequence>MNNAIILGIIWHLVGAASAACFYAPFKQVKKWSWETMWSIGGLVSWLILPWTVSYLLLPDFWQYYGSFSIATLLPVFLFGAMWGIGNINYGLTMRYLGMSMGIGIAIGITLIIGTLMTPILQGRFDVLLGTPGGRMTLLGVFVALIGVAIVSYAGLLKERAMGIQAEEFNLKKGLILAVMCGIFSAGMSFAMDAAKPMHEAASALGINSLYVALPSYVIIMGGGAIINLSYCFIRLATLKNLSVKADFSVAKPLLITNILFSALAGLMWYLQFFFYAWGHAKIPQQYDYMSWMLHMSFYVLCGGIVGLLLKEWKCSTKKPVAVLCIGCLVIILAANIVGLGMAA</sequence>
<reference key="1">
    <citation type="journal article" date="2001" name="Nature">
        <title>Genome sequence of Yersinia pestis, the causative agent of plague.</title>
        <authorList>
            <person name="Parkhill J."/>
            <person name="Wren B.W."/>
            <person name="Thomson N.R."/>
            <person name="Titball R.W."/>
            <person name="Holden M.T.G."/>
            <person name="Prentice M.B."/>
            <person name="Sebaihia M."/>
            <person name="James K.D."/>
            <person name="Churcher C.M."/>
            <person name="Mungall K.L."/>
            <person name="Baker S."/>
            <person name="Basham D."/>
            <person name="Bentley S.D."/>
            <person name="Brooks K."/>
            <person name="Cerdeno-Tarraga A.-M."/>
            <person name="Chillingworth T."/>
            <person name="Cronin A."/>
            <person name="Davies R.M."/>
            <person name="Davis P."/>
            <person name="Dougan G."/>
            <person name="Feltwell T."/>
            <person name="Hamlin N."/>
            <person name="Holroyd S."/>
            <person name="Jagels K."/>
            <person name="Karlyshev A.V."/>
            <person name="Leather S."/>
            <person name="Moule S."/>
            <person name="Oyston P.C.F."/>
            <person name="Quail M.A."/>
            <person name="Rutherford K.M."/>
            <person name="Simmonds M."/>
            <person name="Skelton J."/>
            <person name="Stevens K."/>
            <person name="Whitehead S."/>
            <person name="Barrell B.G."/>
        </authorList>
    </citation>
    <scope>NUCLEOTIDE SEQUENCE [LARGE SCALE GENOMIC DNA]</scope>
    <source>
        <strain>CO-92 / Biovar Orientalis</strain>
    </source>
</reference>
<reference key="2">
    <citation type="journal article" date="2002" name="J. Bacteriol.">
        <title>Genome sequence of Yersinia pestis KIM.</title>
        <authorList>
            <person name="Deng W."/>
            <person name="Burland V."/>
            <person name="Plunkett G. III"/>
            <person name="Boutin A."/>
            <person name="Mayhew G.F."/>
            <person name="Liss P."/>
            <person name="Perna N.T."/>
            <person name="Rose D.J."/>
            <person name="Mau B."/>
            <person name="Zhou S."/>
            <person name="Schwartz D.C."/>
            <person name="Fetherston J.D."/>
            <person name="Lindler L.E."/>
            <person name="Brubaker R.R."/>
            <person name="Plano G.V."/>
            <person name="Straley S.C."/>
            <person name="McDonough K.A."/>
            <person name="Nilles M.L."/>
            <person name="Matson J.S."/>
            <person name="Blattner F.R."/>
            <person name="Perry R.D."/>
        </authorList>
    </citation>
    <scope>NUCLEOTIDE SEQUENCE [LARGE SCALE GENOMIC DNA]</scope>
    <source>
        <strain>KIM10+ / Biovar Mediaevalis</strain>
    </source>
</reference>
<reference key="3">
    <citation type="journal article" date="2004" name="DNA Res.">
        <title>Complete genome sequence of Yersinia pestis strain 91001, an isolate avirulent to humans.</title>
        <authorList>
            <person name="Song Y."/>
            <person name="Tong Z."/>
            <person name="Wang J."/>
            <person name="Wang L."/>
            <person name="Guo Z."/>
            <person name="Han Y."/>
            <person name="Zhang J."/>
            <person name="Pei D."/>
            <person name="Zhou D."/>
            <person name="Qin H."/>
            <person name="Pang X."/>
            <person name="Han Y."/>
            <person name="Zhai J."/>
            <person name="Li M."/>
            <person name="Cui B."/>
            <person name="Qi Z."/>
            <person name="Jin L."/>
            <person name="Dai R."/>
            <person name="Chen F."/>
            <person name="Li S."/>
            <person name="Ye C."/>
            <person name="Du Z."/>
            <person name="Lin W."/>
            <person name="Wang J."/>
            <person name="Yu J."/>
            <person name="Yang H."/>
            <person name="Wang J."/>
            <person name="Huang P."/>
            <person name="Yang R."/>
        </authorList>
    </citation>
    <scope>NUCLEOTIDE SEQUENCE [LARGE SCALE GENOMIC DNA]</scope>
    <source>
        <strain>91001 / Biovar Mediaevalis</strain>
    </source>
</reference>